<organism>
    <name type="scientific">Maridesulfovibrio salexigens (strain ATCC 14822 / DSM 2638 / NCIMB 8403 / VKM B-1763)</name>
    <name type="common">Desulfovibrio salexigens</name>
    <dbReference type="NCBI Taxonomy" id="526222"/>
    <lineage>
        <taxon>Bacteria</taxon>
        <taxon>Pseudomonadati</taxon>
        <taxon>Thermodesulfobacteriota</taxon>
        <taxon>Desulfovibrionia</taxon>
        <taxon>Desulfovibrionales</taxon>
        <taxon>Desulfovibrionaceae</taxon>
        <taxon>Maridesulfovibrio</taxon>
    </lineage>
</organism>
<dbReference type="EMBL" id="CP001649">
    <property type="protein sequence ID" value="ACS79238.1"/>
    <property type="molecule type" value="Genomic_DNA"/>
</dbReference>
<dbReference type="RefSeq" id="WP_015851057.1">
    <property type="nucleotide sequence ID" value="NC_012881.1"/>
</dbReference>
<dbReference type="SMR" id="C6C175"/>
<dbReference type="STRING" id="526222.Desal_1175"/>
<dbReference type="KEGG" id="dsa:Desal_1175"/>
<dbReference type="eggNOG" id="COG0080">
    <property type="taxonomic scope" value="Bacteria"/>
</dbReference>
<dbReference type="HOGENOM" id="CLU_074237_2_1_7"/>
<dbReference type="OrthoDB" id="9802408at2"/>
<dbReference type="Proteomes" id="UP000002601">
    <property type="component" value="Chromosome"/>
</dbReference>
<dbReference type="GO" id="GO:0022625">
    <property type="term" value="C:cytosolic large ribosomal subunit"/>
    <property type="evidence" value="ECO:0007669"/>
    <property type="project" value="TreeGrafter"/>
</dbReference>
<dbReference type="GO" id="GO:0070180">
    <property type="term" value="F:large ribosomal subunit rRNA binding"/>
    <property type="evidence" value="ECO:0007669"/>
    <property type="project" value="UniProtKB-UniRule"/>
</dbReference>
<dbReference type="GO" id="GO:0003735">
    <property type="term" value="F:structural constituent of ribosome"/>
    <property type="evidence" value="ECO:0007669"/>
    <property type="project" value="InterPro"/>
</dbReference>
<dbReference type="GO" id="GO:0006412">
    <property type="term" value="P:translation"/>
    <property type="evidence" value="ECO:0007669"/>
    <property type="project" value="UniProtKB-UniRule"/>
</dbReference>
<dbReference type="CDD" id="cd00349">
    <property type="entry name" value="Ribosomal_L11"/>
    <property type="match status" value="1"/>
</dbReference>
<dbReference type="FunFam" id="1.10.10.250:FF:000001">
    <property type="entry name" value="50S ribosomal protein L11"/>
    <property type="match status" value="1"/>
</dbReference>
<dbReference type="FunFam" id="3.30.1550.10:FF:000001">
    <property type="entry name" value="50S ribosomal protein L11"/>
    <property type="match status" value="1"/>
</dbReference>
<dbReference type="Gene3D" id="1.10.10.250">
    <property type="entry name" value="Ribosomal protein L11, C-terminal domain"/>
    <property type="match status" value="1"/>
</dbReference>
<dbReference type="Gene3D" id="3.30.1550.10">
    <property type="entry name" value="Ribosomal protein L11/L12, N-terminal domain"/>
    <property type="match status" value="1"/>
</dbReference>
<dbReference type="HAMAP" id="MF_00736">
    <property type="entry name" value="Ribosomal_uL11"/>
    <property type="match status" value="1"/>
</dbReference>
<dbReference type="InterPro" id="IPR000911">
    <property type="entry name" value="Ribosomal_uL11"/>
</dbReference>
<dbReference type="InterPro" id="IPR006519">
    <property type="entry name" value="Ribosomal_uL11_bac-typ"/>
</dbReference>
<dbReference type="InterPro" id="IPR020783">
    <property type="entry name" value="Ribosomal_uL11_C"/>
</dbReference>
<dbReference type="InterPro" id="IPR036769">
    <property type="entry name" value="Ribosomal_uL11_C_sf"/>
</dbReference>
<dbReference type="InterPro" id="IPR020785">
    <property type="entry name" value="Ribosomal_uL11_CS"/>
</dbReference>
<dbReference type="InterPro" id="IPR020784">
    <property type="entry name" value="Ribosomal_uL11_N"/>
</dbReference>
<dbReference type="InterPro" id="IPR036796">
    <property type="entry name" value="Ribosomal_uL11_N_sf"/>
</dbReference>
<dbReference type="NCBIfam" id="TIGR01632">
    <property type="entry name" value="L11_bact"/>
    <property type="match status" value="1"/>
</dbReference>
<dbReference type="PANTHER" id="PTHR11661">
    <property type="entry name" value="60S RIBOSOMAL PROTEIN L12"/>
    <property type="match status" value="1"/>
</dbReference>
<dbReference type="PANTHER" id="PTHR11661:SF1">
    <property type="entry name" value="LARGE RIBOSOMAL SUBUNIT PROTEIN UL11M"/>
    <property type="match status" value="1"/>
</dbReference>
<dbReference type="Pfam" id="PF00298">
    <property type="entry name" value="Ribosomal_L11"/>
    <property type="match status" value="1"/>
</dbReference>
<dbReference type="Pfam" id="PF03946">
    <property type="entry name" value="Ribosomal_L11_N"/>
    <property type="match status" value="1"/>
</dbReference>
<dbReference type="SMART" id="SM00649">
    <property type="entry name" value="RL11"/>
    <property type="match status" value="1"/>
</dbReference>
<dbReference type="SUPFAM" id="SSF54747">
    <property type="entry name" value="Ribosomal L11/L12e N-terminal domain"/>
    <property type="match status" value="1"/>
</dbReference>
<dbReference type="SUPFAM" id="SSF46906">
    <property type="entry name" value="Ribosomal protein L11, C-terminal domain"/>
    <property type="match status" value="1"/>
</dbReference>
<dbReference type="PROSITE" id="PS00359">
    <property type="entry name" value="RIBOSOMAL_L11"/>
    <property type="match status" value="1"/>
</dbReference>
<sequence length="141" mass="14949">MAKKEIGKIKLQIPAGSANPSPPVGPALGQHGVNIMEFCKAFNAKTQDQKGMIIPVIITVYQDRSFSFITKTPPASTLLLKAAKLQKGSGEPNKNKVGKVTKAQVKEIAELKAPDLTAADTEAAMKSIMGTARSMGIEVTE</sequence>
<proteinExistence type="inferred from homology"/>
<protein>
    <recommendedName>
        <fullName evidence="1">Large ribosomal subunit protein uL11</fullName>
    </recommendedName>
    <alternativeName>
        <fullName evidence="2">50S ribosomal protein L11</fullName>
    </alternativeName>
</protein>
<feature type="chain" id="PRO_1000212768" description="Large ribosomal subunit protein uL11">
    <location>
        <begin position="1"/>
        <end position="141"/>
    </location>
</feature>
<accession>C6C175</accession>
<gene>
    <name evidence="1" type="primary">rplK</name>
    <name type="ordered locus">Desal_1175</name>
</gene>
<reference key="1">
    <citation type="submission" date="2009-06" db="EMBL/GenBank/DDBJ databases">
        <title>Complete sequence of Desulfovibrio salexigens DSM 2638.</title>
        <authorList>
            <consortium name="US DOE Joint Genome Institute"/>
            <person name="Lucas S."/>
            <person name="Copeland A."/>
            <person name="Lapidus A."/>
            <person name="Glavina del Rio T."/>
            <person name="Tice H."/>
            <person name="Bruce D."/>
            <person name="Goodwin L."/>
            <person name="Pitluck S."/>
            <person name="Munk A.C."/>
            <person name="Brettin T."/>
            <person name="Detter J.C."/>
            <person name="Han C."/>
            <person name="Tapia R."/>
            <person name="Larimer F."/>
            <person name="Land M."/>
            <person name="Hauser L."/>
            <person name="Kyrpides N."/>
            <person name="Anderson I."/>
            <person name="Wall J.D."/>
            <person name="Arkin A.P."/>
            <person name="Dehal P."/>
            <person name="Chivian D."/>
            <person name="Giles B."/>
            <person name="Hazen T.C."/>
        </authorList>
    </citation>
    <scope>NUCLEOTIDE SEQUENCE [LARGE SCALE GENOMIC DNA]</scope>
    <source>
        <strain>ATCC 14822 / DSM 2638 / NCIMB 8403 / VKM B-1763</strain>
    </source>
</reference>
<name>RL11_MARSD</name>
<evidence type="ECO:0000255" key="1">
    <source>
        <dbReference type="HAMAP-Rule" id="MF_00736"/>
    </source>
</evidence>
<evidence type="ECO:0000305" key="2"/>
<keyword id="KW-0488">Methylation</keyword>
<keyword id="KW-1185">Reference proteome</keyword>
<keyword id="KW-0687">Ribonucleoprotein</keyword>
<keyword id="KW-0689">Ribosomal protein</keyword>
<keyword id="KW-0694">RNA-binding</keyword>
<keyword id="KW-0699">rRNA-binding</keyword>
<comment type="function">
    <text evidence="1">Forms part of the ribosomal stalk which helps the ribosome interact with GTP-bound translation factors.</text>
</comment>
<comment type="subunit">
    <text evidence="1">Part of the ribosomal stalk of the 50S ribosomal subunit. Interacts with L10 and the large rRNA to form the base of the stalk. L10 forms an elongated spine to which L12 dimers bind in a sequential fashion forming a multimeric L10(L12)X complex.</text>
</comment>
<comment type="PTM">
    <text evidence="1">One or more lysine residues are methylated.</text>
</comment>
<comment type="similarity">
    <text evidence="1">Belongs to the universal ribosomal protein uL11 family.</text>
</comment>